<name>Y3549_YERPE</name>
<reference key="1">
    <citation type="journal article" date="2001" name="Nature">
        <title>Genome sequence of Yersinia pestis, the causative agent of plague.</title>
        <authorList>
            <person name="Parkhill J."/>
            <person name="Wren B.W."/>
            <person name="Thomson N.R."/>
            <person name="Titball R.W."/>
            <person name="Holden M.T.G."/>
            <person name="Prentice M.B."/>
            <person name="Sebaihia M."/>
            <person name="James K.D."/>
            <person name="Churcher C.M."/>
            <person name="Mungall K.L."/>
            <person name="Baker S."/>
            <person name="Basham D."/>
            <person name="Bentley S.D."/>
            <person name="Brooks K."/>
            <person name="Cerdeno-Tarraga A.-M."/>
            <person name="Chillingworth T."/>
            <person name="Cronin A."/>
            <person name="Davies R.M."/>
            <person name="Davis P."/>
            <person name="Dougan G."/>
            <person name="Feltwell T."/>
            <person name="Hamlin N."/>
            <person name="Holroyd S."/>
            <person name="Jagels K."/>
            <person name="Karlyshev A.V."/>
            <person name="Leather S."/>
            <person name="Moule S."/>
            <person name="Oyston P.C.F."/>
            <person name="Quail M.A."/>
            <person name="Rutherford K.M."/>
            <person name="Simmonds M."/>
            <person name="Skelton J."/>
            <person name="Stevens K."/>
            <person name="Whitehead S."/>
            <person name="Barrell B.G."/>
        </authorList>
    </citation>
    <scope>NUCLEOTIDE SEQUENCE [LARGE SCALE GENOMIC DNA]</scope>
    <source>
        <strain>CO-92 / Biovar Orientalis</strain>
    </source>
</reference>
<reference key="2">
    <citation type="journal article" date="2002" name="J. Bacteriol.">
        <title>Genome sequence of Yersinia pestis KIM.</title>
        <authorList>
            <person name="Deng W."/>
            <person name="Burland V."/>
            <person name="Plunkett G. III"/>
            <person name="Boutin A."/>
            <person name="Mayhew G.F."/>
            <person name="Liss P."/>
            <person name="Perna N.T."/>
            <person name="Rose D.J."/>
            <person name="Mau B."/>
            <person name="Zhou S."/>
            <person name="Schwartz D.C."/>
            <person name="Fetherston J.D."/>
            <person name="Lindler L.E."/>
            <person name="Brubaker R.R."/>
            <person name="Plano G.V."/>
            <person name="Straley S.C."/>
            <person name="McDonough K.A."/>
            <person name="Nilles M.L."/>
            <person name="Matson J.S."/>
            <person name="Blattner F.R."/>
            <person name="Perry R.D."/>
        </authorList>
    </citation>
    <scope>NUCLEOTIDE SEQUENCE [LARGE SCALE GENOMIC DNA]</scope>
    <source>
        <strain>KIM10+ / Biovar Mediaevalis</strain>
    </source>
</reference>
<reference key="3">
    <citation type="journal article" date="2004" name="DNA Res.">
        <title>Complete genome sequence of Yersinia pestis strain 91001, an isolate avirulent to humans.</title>
        <authorList>
            <person name="Song Y."/>
            <person name="Tong Z."/>
            <person name="Wang J."/>
            <person name="Wang L."/>
            <person name="Guo Z."/>
            <person name="Han Y."/>
            <person name="Zhang J."/>
            <person name="Pei D."/>
            <person name="Zhou D."/>
            <person name="Qin H."/>
            <person name="Pang X."/>
            <person name="Han Y."/>
            <person name="Zhai J."/>
            <person name="Li M."/>
            <person name="Cui B."/>
            <person name="Qi Z."/>
            <person name="Jin L."/>
            <person name="Dai R."/>
            <person name="Chen F."/>
            <person name="Li S."/>
            <person name="Ye C."/>
            <person name="Du Z."/>
            <person name="Lin W."/>
            <person name="Wang J."/>
            <person name="Yu J."/>
            <person name="Yang H."/>
            <person name="Wang J."/>
            <person name="Huang P."/>
            <person name="Yang R."/>
        </authorList>
    </citation>
    <scope>NUCLEOTIDE SEQUENCE [LARGE SCALE GENOMIC DNA]</scope>
    <source>
        <strain>91001 / Biovar Mediaevalis</strain>
    </source>
</reference>
<sequence length="117" mass="13077">MSQRDTGAHYENLARRHLERAGLVFQAANVAFRGGEIDLIMRDGDAWVFVEVRFRRNDLFGGAAASITPRKQQRLHLAAAVWLAQRGASFATTSCRFDVVAITGNQLEWLPNAFNTD</sequence>
<dbReference type="EMBL" id="AL590842">
    <property type="protein sequence ID" value="CAL22137.1"/>
    <property type="molecule type" value="Genomic_DNA"/>
</dbReference>
<dbReference type="EMBL" id="AE009952">
    <property type="protein sequence ID" value="AAM83713.1"/>
    <property type="molecule type" value="Genomic_DNA"/>
</dbReference>
<dbReference type="EMBL" id="AE017042">
    <property type="protein sequence ID" value="AAS63950.1"/>
    <property type="molecule type" value="Genomic_DNA"/>
</dbReference>
<dbReference type="PIR" id="AF0431">
    <property type="entry name" value="AF0431"/>
</dbReference>
<dbReference type="RefSeq" id="WP_002210147.1">
    <property type="nucleotide sequence ID" value="NZ_WUCM01000069.1"/>
</dbReference>
<dbReference type="RefSeq" id="YP_002348436.1">
    <property type="nucleotide sequence ID" value="NC_003143.1"/>
</dbReference>
<dbReference type="SMR" id="Q8ZB75"/>
<dbReference type="STRING" id="214092.YPO3549"/>
<dbReference type="PaxDb" id="214092-YPO3549"/>
<dbReference type="DNASU" id="1145066"/>
<dbReference type="EnsemblBacteria" id="AAS63950">
    <property type="protein sequence ID" value="AAS63950"/>
    <property type="gene ID" value="YP_3803"/>
</dbReference>
<dbReference type="KEGG" id="ype:YPO3549"/>
<dbReference type="KEGG" id="ypk:y0119"/>
<dbReference type="KEGG" id="ypm:YP_3803"/>
<dbReference type="PATRIC" id="fig|214092.21.peg.4043"/>
<dbReference type="eggNOG" id="COG0792">
    <property type="taxonomic scope" value="Bacteria"/>
</dbReference>
<dbReference type="HOGENOM" id="CLU_115353_1_0_6"/>
<dbReference type="OMA" id="TVLERNW"/>
<dbReference type="OrthoDB" id="9794876at2"/>
<dbReference type="Proteomes" id="UP000000815">
    <property type="component" value="Chromosome"/>
</dbReference>
<dbReference type="Proteomes" id="UP000001019">
    <property type="component" value="Chromosome"/>
</dbReference>
<dbReference type="Proteomes" id="UP000002490">
    <property type="component" value="Chromosome"/>
</dbReference>
<dbReference type="GO" id="GO:0003676">
    <property type="term" value="F:nucleic acid binding"/>
    <property type="evidence" value="ECO:0007669"/>
    <property type="project" value="InterPro"/>
</dbReference>
<dbReference type="CDD" id="cd20736">
    <property type="entry name" value="PoNe_Nuclease"/>
    <property type="match status" value="1"/>
</dbReference>
<dbReference type="Gene3D" id="3.40.1350.10">
    <property type="match status" value="1"/>
</dbReference>
<dbReference type="HAMAP" id="MF_00048">
    <property type="entry name" value="UPF0102"/>
    <property type="match status" value="1"/>
</dbReference>
<dbReference type="InterPro" id="IPR011335">
    <property type="entry name" value="Restrct_endonuc-II-like"/>
</dbReference>
<dbReference type="InterPro" id="IPR011856">
    <property type="entry name" value="tRNA_endonuc-like_dom_sf"/>
</dbReference>
<dbReference type="InterPro" id="IPR003509">
    <property type="entry name" value="UPF0102_YraN-like"/>
</dbReference>
<dbReference type="NCBIfam" id="NF009150">
    <property type="entry name" value="PRK12497.1-3"/>
    <property type="match status" value="1"/>
</dbReference>
<dbReference type="NCBIfam" id="TIGR00252">
    <property type="entry name" value="YraN family protein"/>
    <property type="match status" value="1"/>
</dbReference>
<dbReference type="PANTHER" id="PTHR34039">
    <property type="entry name" value="UPF0102 PROTEIN YRAN"/>
    <property type="match status" value="1"/>
</dbReference>
<dbReference type="PANTHER" id="PTHR34039:SF1">
    <property type="entry name" value="UPF0102 PROTEIN YRAN"/>
    <property type="match status" value="1"/>
</dbReference>
<dbReference type="Pfam" id="PF02021">
    <property type="entry name" value="UPF0102"/>
    <property type="match status" value="1"/>
</dbReference>
<dbReference type="SUPFAM" id="SSF52980">
    <property type="entry name" value="Restriction endonuclease-like"/>
    <property type="match status" value="1"/>
</dbReference>
<comment type="similarity">
    <text evidence="1">Belongs to the UPF0102 family.</text>
</comment>
<protein>
    <recommendedName>
        <fullName evidence="1">UPF0102 protein YPO3549/y0119/YP_3803</fullName>
    </recommendedName>
</protein>
<proteinExistence type="inferred from homology"/>
<feature type="chain" id="PRO_0000167396" description="UPF0102 protein YPO3549/y0119/YP_3803">
    <location>
        <begin position="1"/>
        <end position="117"/>
    </location>
</feature>
<accession>Q8ZB75</accession>
<accession>Q0WBA2</accession>
<gene>
    <name type="ordered locus">YPO3549</name>
    <name type="ordered locus">y0119</name>
    <name type="ordered locus">YP_3803</name>
</gene>
<organism>
    <name type="scientific">Yersinia pestis</name>
    <dbReference type="NCBI Taxonomy" id="632"/>
    <lineage>
        <taxon>Bacteria</taxon>
        <taxon>Pseudomonadati</taxon>
        <taxon>Pseudomonadota</taxon>
        <taxon>Gammaproteobacteria</taxon>
        <taxon>Enterobacterales</taxon>
        <taxon>Yersiniaceae</taxon>
        <taxon>Yersinia</taxon>
    </lineage>
</organism>
<evidence type="ECO:0000255" key="1">
    <source>
        <dbReference type="HAMAP-Rule" id="MF_00048"/>
    </source>
</evidence>
<keyword id="KW-1185">Reference proteome</keyword>